<keyword id="KW-0012">Acyltransferase</keyword>
<keyword id="KW-0963">Cytoplasm</keyword>
<keyword id="KW-0408">Iron</keyword>
<keyword id="KW-0479">Metal-binding</keyword>
<keyword id="KW-0808">Transferase</keyword>
<keyword id="KW-0819">tRNA processing</keyword>
<accession>B0UPD3</accession>
<evidence type="ECO:0000255" key="1">
    <source>
        <dbReference type="HAMAP-Rule" id="MF_01445"/>
    </source>
</evidence>
<comment type="function">
    <text evidence="1">Required for the formation of a threonylcarbamoyl group on adenosine at position 37 (t(6)A37) in tRNAs that read codons beginning with adenine. Is involved in the transfer of the threonylcarbamoyl moiety of threonylcarbamoyl-AMP (TC-AMP) to the N6 group of A37, together with TsaE and TsaB. TsaD likely plays a direct catalytic role in this reaction.</text>
</comment>
<comment type="catalytic activity">
    <reaction evidence="1">
        <text>L-threonylcarbamoyladenylate + adenosine(37) in tRNA = N(6)-L-threonylcarbamoyladenosine(37) in tRNA + AMP + H(+)</text>
        <dbReference type="Rhea" id="RHEA:37059"/>
        <dbReference type="Rhea" id="RHEA-COMP:10162"/>
        <dbReference type="Rhea" id="RHEA-COMP:10163"/>
        <dbReference type="ChEBI" id="CHEBI:15378"/>
        <dbReference type="ChEBI" id="CHEBI:73682"/>
        <dbReference type="ChEBI" id="CHEBI:74411"/>
        <dbReference type="ChEBI" id="CHEBI:74418"/>
        <dbReference type="ChEBI" id="CHEBI:456215"/>
        <dbReference type="EC" id="2.3.1.234"/>
    </reaction>
</comment>
<comment type="cofactor">
    <cofactor evidence="1">
        <name>Fe(2+)</name>
        <dbReference type="ChEBI" id="CHEBI:29033"/>
    </cofactor>
    <text evidence="1">Binds 1 Fe(2+) ion per subunit.</text>
</comment>
<comment type="subcellular location">
    <subcellularLocation>
        <location evidence="1">Cytoplasm</location>
    </subcellularLocation>
</comment>
<comment type="similarity">
    <text evidence="1">Belongs to the KAE1 / TsaD family.</text>
</comment>
<reference key="1">
    <citation type="submission" date="2008-02" db="EMBL/GenBank/DDBJ databases">
        <title>Complete sequence of chromosome of Methylobacterium sp. 4-46.</title>
        <authorList>
            <consortium name="US DOE Joint Genome Institute"/>
            <person name="Copeland A."/>
            <person name="Lucas S."/>
            <person name="Lapidus A."/>
            <person name="Glavina del Rio T."/>
            <person name="Dalin E."/>
            <person name="Tice H."/>
            <person name="Bruce D."/>
            <person name="Goodwin L."/>
            <person name="Pitluck S."/>
            <person name="Chertkov O."/>
            <person name="Brettin T."/>
            <person name="Detter J.C."/>
            <person name="Han C."/>
            <person name="Kuske C.R."/>
            <person name="Schmutz J."/>
            <person name="Larimer F."/>
            <person name="Land M."/>
            <person name="Hauser L."/>
            <person name="Kyrpides N."/>
            <person name="Ivanova N."/>
            <person name="Marx C.J."/>
            <person name="Richardson P."/>
        </authorList>
    </citation>
    <scope>NUCLEOTIDE SEQUENCE [LARGE SCALE GENOMIC DNA]</scope>
    <source>
        <strain>4-46</strain>
    </source>
</reference>
<protein>
    <recommendedName>
        <fullName evidence="1">tRNA N6-adenosine threonylcarbamoyltransferase</fullName>
        <ecNumber evidence="1">2.3.1.234</ecNumber>
    </recommendedName>
    <alternativeName>
        <fullName evidence="1">N6-L-threonylcarbamoyladenine synthase</fullName>
        <shortName evidence="1">t(6)A synthase</shortName>
    </alternativeName>
    <alternativeName>
        <fullName evidence="1">t(6)A37 threonylcarbamoyladenosine biosynthesis protein TsaD</fullName>
    </alternativeName>
    <alternativeName>
        <fullName evidence="1">tRNA threonylcarbamoyladenosine biosynthesis protein TsaD</fullName>
    </alternativeName>
</protein>
<gene>
    <name evidence="1" type="primary">tsaD</name>
    <name type="synonym">gcp</name>
    <name type="ordered locus">M446_4533</name>
</gene>
<dbReference type="EC" id="2.3.1.234" evidence="1"/>
<dbReference type="EMBL" id="CP000943">
    <property type="protein sequence ID" value="ACA18874.1"/>
    <property type="molecule type" value="Genomic_DNA"/>
</dbReference>
<dbReference type="RefSeq" id="WP_012334263.1">
    <property type="nucleotide sequence ID" value="NC_010511.1"/>
</dbReference>
<dbReference type="SMR" id="B0UPD3"/>
<dbReference type="STRING" id="426117.M446_4533"/>
<dbReference type="KEGG" id="met:M446_4533"/>
<dbReference type="eggNOG" id="COG0533">
    <property type="taxonomic scope" value="Bacteria"/>
</dbReference>
<dbReference type="HOGENOM" id="CLU_023208_0_2_5"/>
<dbReference type="GO" id="GO:0005737">
    <property type="term" value="C:cytoplasm"/>
    <property type="evidence" value="ECO:0007669"/>
    <property type="project" value="UniProtKB-SubCell"/>
</dbReference>
<dbReference type="GO" id="GO:0005506">
    <property type="term" value="F:iron ion binding"/>
    <property type="evidence" value="ECO:0007669"/>
    <property type="project" value="UniProtKB-UniRule"/>
</dbReference>
<dbReference type="GO" id="GO:0061711">
    <property type="term" value="F:N(6)-L-threonylcarbamoyladenine synthase activity"/>
    <property type="evidence" value="ECO:0007669"/>
    <property type="project" value="UniProtKB-EC"/>
</dbReference>
<dbReference type="GO" id="GO:0002949">
    <property type="term" value="P:tRNA threonylcarbamoyladenosine modification"/>
    <property type="evidence" value="ECO:0007669"/>
    <property type="project" value="UniProtKB-UniRule"/>
</dbReference>
<dbReference type="FunFam" id="3.30.420.40:FF:000012">
    <property type="entry name" value="tRNA N6-adenosine threonylcarbamoyltransferase"/>
    <property type="match status" value="1"/>
</dbReference>
<dbReference type="Gene3D" id="3.30.420.40">
    <property type="match status" value="2"/>
</dbReference>
<dbReference type="HAMAP" id="MF_01445">
    <property type="entry name" value="TsaD"/>
    <property type="match status" value="1"/>
</dbReference>
<dbReference type="InterPro" id="IPR043129">
    <property type="entry name" value="ATPase_NBD"/>
</dbReference>
<dbReference type="InterPro" id="IPR000905">
    <property type="entry name" value="Gcp-like_dom"/>
</dbReference>
<dbReference type="InterPro" id="IPR017861">
    <property type="entry name" value="KAE1/TsaD"/>
</dbReference>
<dbReference type="InterPro" id="IPR022450">
    <property type="entry name" value="TsaD"/>
</dbReference>
<dbReference type="NCBIfam" id="TIGR00329">
    <property type="entry name" value="gcp_kae1"/>
    <property type="match status" value="1"/>
</dbReference>
<dbReference type="NCBIfam" id="TIGR03723">
    <property type="entry name" value="T6A_TsaD_YgjD"/>
    <property type="match status" value="1"/>
</dbReference>
<dbReference type="PANTHER" id="PTHR11735">
    <property type="entry name" value="TRNA N6-ADENOSINE THREONYLCARBAMOYLTRANSFERASE"/>
    <property type="match status" value="1"/>
</dbReference>
<dbReference type="PANTHER" id="PTHR11735:SF6">
    <property type="entry name" value="TRNA N6-ADENOSINE THREONYLCARBAMOYLTRANSFERASE, MITOCHONDRIAL"/>
    <property type="match status" value="1"/>
</dbReference>
<dbReference type="Pfam" id="PF00814">
    <property type="entry name" value="TsaD"/>
    <property type="match status" value="1"/>
</dbReference>
<dbReference type="PRINTS" id="PR00789">
    <property type="entry name" value="OSIALOPTASE"/>
</dbReference>
<dbReference type="SUPFAM" id="SSF53067">
    <property type="entry name" value="Actin-like ATPase domain"/>
    <property type="match status" value="2"/>
</dbReference>
<sequence length="348" mass="35781">MNVLGIETTCDETAAAIVTAAEDGRAVIRANEVLSQIAEHAAYGGVVPEIAARAHVEVVDRLIARALQEAGLGFDDLDGIAVAAGPGLIGGVLVGLVTAKTLSLVTRKPLLAVNHLEAHALTARMTDGIAFPYLLLLASGGHTQLVAVKGVGEYVRLGTTIDDAIGEAFDKAAKLLGLAYPGGPEVERAAEGGDPERFALPRPMLGRREPNFSLSGLKTALRIEAERIAPLSGQDVADLCASFQAAVVDVVVDRVRVALRAFGDVAGHPTALVAAGGVAANAALRRALSQLAGEAGLPLVAPPLPLCGDNGAMIAWAGLERLRLGLVDDITAPARPRWPFAEPLATAG</sequence>
<feature type="chain" id="PRO_1000145996" description="tRNA N6-adenosine threonylcarbamoyltransferase">
    <location>
        <begin position="1"/>
        <end position="348"/>
    </location>
</feature>
<feature type="binding site" evidence="1">
    <location>
        <position position="115"/>
    </location>
    <ligand>
        <name>Fe cation</name>
        <dbReference type="ChEBI" id="CHEBI:24875"/>
    </ligand>
</feature>
<feature type="binding site" evidence="1">
    <location>
        <position position="119"/>
    </location>
    <ligand>
        <name>Fe cation</name>
        <dbReference type="ChEBI" id="CHEBI:24875"/>
    </ligand>
</feature>
<feature type="binding site" evidence="1">
    <location>
        <begin position="137"/>
        <end position="141"/>
    </location>
    <ligand>
        <name>substrate</name>
    </ligand>
</feature>
<feature type="binding site" evidence="1">
    <location>
        <position position="170"/>
    </location>
    <ligand>
        <name>substrate</name>
    </ligand>
</feature>
<feature type="binding site" evidence="1">
    <location>
        <position position="183"/>
    </location>
    <ligand>
        <name>substrate</name>
    </ligand>
</feature>
<feature type="binding site" evidence="1">
    <location>
        <position position="281"/>
    </location>
    <ligand>
        <name>substrate</name>
    </ligand>
</feature>
<feature type="binding site" evidence="1">
    <location>
        <position position="309"/>
    </location>
    <ligand>
        <name>Fe cation</name>
        <dbReference type="ChEBI" id="CHEBI:24875"/>
    </ligand>
</feature>
<proteinExistence type="inferred from homology"/>
<organism>
    <name type="scientific">Methylobacterium sp. (strain 4-46)</name>
    <dbReference type="NCBI Taxonomy" id="426117"/>
    <lineage>
        <taxon>Bacteria</taxon>
        <taxon>Pseudomonadati</taxon>
        <taxon>Pseudomonadota</taxon>
        <taxon>Alphaproteobacteria</taxon>
        <taxon>Hyphomicrobiales</taxon>
        <taxon>Methylobacteriaceae</taxon>
        <taxon>Methylobacterium</taxon>
    </lineage>
</organism>
<name>TSAD_METS4</name>